<reference key="1">
    <citation type="journal article" date="2004" name="Proc. Natl. Acad. Sci. U.S.A.">
        <title>Genome sequence of the enterobacterial phytopathogen Erwinia carotovora subsp. atroseptica and characterization of virulence factors.</title>
        <authorList>
            <person name="Bell K.S."/>
            <person name="Sebaihia M."/>
            <person name="Pritchard L."/>
            <person name="Holden M.T.G."/>
            <person name="Hyman L.J."/>
            <person name="Holeva M.C."/>
            <person name="Thomson N.R."/>
            <person name="Bentley S.D."/>
            <person name="Churcher L.J.C."/>
            <person name="Mungall K."/>
            <person name="Atkin R."/>
            <person name="Bason N."/>
            <person name="Brooks K."/>
            <person name="Chillingworth T."/>
            <person name="Clark K."/>
            <person name="Doggett J."/>
            <person name="Fraser A."/>
            <person name="Hance Z."/>
            <person name="Hauser H."/>
            <person name="Jagels K."/>
            <person name="Moule S."/>
            <person name="Norbertczak H."/>
            <person name="Ormond D."/>
            <person name="Price C."/>
            <person name="Quail M.A."/>
            <person name="Sanders M."/>
            <person name="Walker D."/>
            <person name="Whitehead S."/>
            <person name="Salmond G.P.C."/>
            <person name="Birch P.R.J."/>
            <person name="Parkhill J."/>
            <person name="Toth I.K."/>
        </authorList>
    </citation>
    <scope>NUCLEOTIDE SEQUENCE [LARGE SCALE GENOMIC DNA]</scope>
    <source>
        <strain>SCRI 1043 / ATCC BAA-672</strain>
    </source>
</reference>
<keyword id="KW-0067">ATP-binding</keyword>
<keyword id="KW-0963">Cytoplasm</keyword>
<keyword id="KW-0275">Fatty acid biosynthesis</keyword>
<keyword id="KW-0276">Fatty acid metabolism</keyword>
<keyword id="KW-0444">Lipid biosynthesis</keyword>
<keyword id="KW-0443">Lipid metabolism</keyword>
<keyword id="KW-0547">Nucleotide-binding</keyword>
<keyword id="KW-1185">Reference proteome</keyword>
<keyword id="KW-0808">Transferase</keyword>
<sequence length="319" mass="35400">MSLNFLDFEQPIAELEAKIDSLTAVSRQDEKLDINLDEEVQRLREKSVELTRKIFADLGAWQVAQLARHPQRPYTLDYIKHIFTDFDELAGDRAYADDKAIVGGIARLDGRPVMIIGHQKGRETKEKIRRNFGMPAPEGYRKALRLMEMADRFRMPIITFIDTPGAYPGVGAEERGQSEAIARNLREMSTLRVPIICTVIGEGGSGGALAIGVGDKVNMLQYSTYSVISPEGCASILWKSADKAPLAAEAMGIIAPRLKELKLIDTVIPEPLGSAHRNVPVMAASLKAQLLADLLDLEGLSEEALLNRRYQRLMNYGYC</sequence>
<evidence type="ECO:0000255" key="1">
    <source>
        <dbReference type="HAMAP-Rule" id="MF_00823"/>
    </source>
</evidence>
<evidence type="ECO:0000255" key="2">
    <source>
        <dbReference type="PROSITE-ProRule" id="PRU01137"/>
    </source>
</evidence>
<dbReference type="EC" id="2.1.3.15" evidence="1"/>
<dbReference type="EMBL" id="BX950851">
    <property type="protein sequence ID" value="CAG73958.1"/>
    <property type="molecule type" value="Genomic_DNA"/>
</dbReference>
<dbReference type="RefSeq" id="WP_011092645.1">
    <property type="nucleotide sequence ID" value="NC_004547.2"/>
</dbReference>
<dbReference type="SMR" id="Q6D8C7"/>
<dbReference type="STRING" id="218491.ECA1047"/>
<dbReference type="GeneID" id="57207876"/>
<dbReference type="KEGG" id="eca:ECA1047"/>
<dbReference type="PATRIC" id="fig|218491.5.peg.1055"/>
<dbReference type="eggNOG" id="COG0825">
    <property type="taxonomic scope" value="Bacteria"/>
</dbReference>
<dbReference type="HOGENOM" id="CLU_015486_0_2_6"/>
<dbReference type="OrthoDB" id="9808023at2"/>
<dbReference type="UniPathway" id="UPA00655">
    <property type="reaction ID" value="UER00711"/>
</dbReference>
<dbReference type="Proteomes" id="UP000007966">
    <property type="component" value="Chromosome"/>
</dbReference>
<dbReference type="GO" id="GO:0009317">
    <property type="term" value="C:acetyl-CoA carboxylase complex"/>
    <property type="evidence" value="ECO:0007669"/>
    <property type="project" value="InterPro"/>
</dbReference>
<dbReference type="GO" id="GO:0003989">
    <property type="term" value="F:acetyl-CoA carboxylase activity"/>
    <property type="evidence" value="ECO:0007669"/>
    <property type="project" value="InterPro"/>
</dbReference>
<dbReference type="GO" id="GO:0005524">
    <property type="term" value="F:ATP binding"/>
    <property type="evidence" value="ECO:0007669"/>
    <property type="project" value="UniProtKB-KW"/>
</dbReference>
<dbReference type="GO" id="GO:0016743">
    <property type="term" value="F:carboxyl- or carbamoyltransferase activity"/>
    <property type="evidence" value="ECO:0007669"/>
    <property type="project" value="UniProtKB-UniRule"/>
</dbReference>
<dbReference type="GO" id="GO:0006633">
    <property type="term" value="P:fatty acid biosynthetic process"/>
    <property type="evidence" value="ECO:0007669"/>
    <property type="project" value="UniProtKB-KW"/>
</dbReference>
<dbReference type="GO" id="GO:2001295">
    <property type="term" value="P:malonyl-CoA biosynthetic process"/>
    <property type="evidence" value="ECO:0007669"/>
    <property type="project" value="UniProtKB-UniRule"/>
</dbReference>
<dbReference type="FunFam" id="3.90.226.10:FF:000008">
    <property type="entry name" value="Acetyl-coenzyme A carboxylase carboxyl transferase subunit alpha"/>
    <property type="match status" value="1"/>
</dbReference>
<dbReference type="Gene3D" id="3.90.226.10">
    <property type="entry name" value="2-enoyl-CoA Hydratase, Chain A, domain 1"/>
    <property type="match status" value="1"/>
</dbReference>
<dbReference type="HAMAP" id="MF_00823">
    <property type="entry name" value="AcetylCoA_CT_alpha"/>
    <property type="match status" value="1"/>
</dbReference>
<dbReference type="InterPro" id="IPR001095">
    <property type="entry name" value="Acetyl_CoA_COase_a_su"/>
</dbReference>
<dbReference type="InterPro" id="IPR029045">
    <property type="entry name" value="ClpP/crotonase-like_dom_sf"/>
</dbReference>
<dbReference type="InterPro" id="IPR011763">
    <property type="entry name" value="COA_CT_C"/>
</dbReference>
<dbReference type="NCBIfam" id="TIGR00513">
    <property type="entry name" value="accA"/>
    <property type="match status" value="1"/>
</dbReference>
<dbReference type="NCBIfam" id="NF041504">
    <property type="entry name" value="AccA_sub"/>
    <property type="match status" value="1"/>
</dbReference>
<dbReference type="NCBIfam" id="NF004344">
    <property type="entry name" value="PRK05724.1"/>
    <property type="match status" value="1"/>
</dbReference>
<dbReference type="PANTHER" id="PTHR42853">
    <property type="entry name" value="ACETYL-COENZYME A CARBOXYLASE CARBOXYL TRANSFERASE SUBUNIT ALPHA"/>
    <property type="match status" value="1"/>
</dbReference>
<dbReference type="PANTHER" id="PTHR42853:SF3">
    <property type="entry name" value="ACETYL-COENZYME A CARBOXYLASE CARBOXYL TRANSFERASE SUBUNIT ALPHA, CHLOROPLASTIC"/>
    <property type="match status" value="1"/>
</dbReference>
<dbReference type="Pfam" id="PF03255">
    <property type="entry name" value="ACCA"/>
    <property type="match status" value="1"/>
</dbReference>
<dbReference type="PRINTS" id="PR01069">
    <property type="entry name" value="ACCCTRFRASEA"/>
</dbReference>
<dbReference type="SUPFAM" id="SSF52096">
    <property type="entry name" value="ClpP/crotonase"/>
    <property type="match status" value="1"/>
</dbReference>
<dbReference type="PROSITE" id="PS50989">
    <property type="entry name" value="COA_CT_CTER"/>
    <property type="match status" value="1"/>
</dbReference>
<name>ACCA_PECAS</name>
<proteinExistence type="inferred from homology"/>
<accession>Q6D8C7</accession>
<organism>
    <name type="scientific">Pectobacterium atrosepticum (strain SCRI 1043 / ATCC BAA-672)</name>
    <name type="common">Erwinia carotovora subsp. atroseptica</name>
    <dbReference type="NCBI Taxonomy" id="218491"/>
    <lineage>
        <taxon>Bacteria</taxon>
        <taxon>Pseudomonadati</taxon>
        <taxon>Pseudomonadota</taxon>
        <taxon>Gammaproteobacteria</taxon>
        <taxon>Enterobacterales</taxon>
        <taxon>Pectobacteriaceae</taxon>
        <taxon>Pectobacterium</taxon>
    </lineage>
</organism>
<gene>
    <name evidence="1" type="primary">accA</name>
    <name type="ordered locus">ECA1047</name>
</gene>
<comment type="function">
    <text evidence="1">Component of the acetyl coenzyme A carboxylase (ACC) complex. First, biotin carboxylase catalyzes the carboxylation of biotin on its carrier protein (BCCP) and then the CO(2) group is transferred by the carboxyltransferase to acetyl-CoA to form malonyl-CoA.</text>
</comment>
<comment type="catalytic activity">
    <reaction evidence="1">
        <text>N(6)-carboxybiotinyl-L-lysyl-[protein] + acetyl-CoA = N(6)-biotinyl-L-lysyl-[protein] + malonyl-CoA</text>
        <dbReference type="Rhea" id="RHEA:54728"/>
        <dbReference type="Rhea" id="RHEA-COMP:10505"/>
        <dbReference type="Rhea" id="RHEA-COMP:10506"/>
        <dbReference type="ChEBI" id="CHEBI:57288"/>
        <dbReference type="ChEBI" id="CHEBI:57384"/>
        <dbReference type="ChEBI" id="CHEBI:83144"/>
        <dbReference type="ChEBI" id="CHEBI:83145"/>
        <dbReference type="EC" id="2.1.3.15"/>
    </reaction>
</comment>
<comment type="pathway">
    <text evidence="1">Lipid metabolism; malonyl-CoA biosynthesis; malonyl-CoA from acetyl-CoA: step 1/1.</text>
</comment>
<comment type="subunit">
    <text evidence="1">Acetyl-CoA carboxylase is a heterohexamer composed of biotin carboxyl carrier protein (AccB), biotin carboxylase (AccC) and two subunits each of ACCase subunit alpha (AccA) and ACCase subunit beta (AccD).</text>
</comment>
<comment type="subcellular location">
    <subcellularLocation>
        <location evidence="1">Cytoplasm</location>
    </subcellularLocation>
</comment>
<comment type="similarity">
    <text evidence="1">Belongs to the AccA family.</text>
</comment>
<feature type="chain" id="PRO_0000223767" description="Acetyl-coenzyme A carboxylase carboxyl transferase subunit alpha">
    <location>
        <begin position="1"/>
        <end position="319"/>
    </location>
</feature>
<feature type="domain" description="CoA carboxyltransferase C-terminal" evidence="2">
    <location>
        <begin position="35"/>
        <end position="296"/>
    </location>
</feature>
<protein>
    <recommendedName>
        <fullName evidence="1">Acetyl-coenzyme A carboxylase carboxyl transferase subunit alpha</fullName>
        <shortName evidence="1">ACCase subunit alpha</shortName>
        <shortName evidence="1">Acetyl-CoA carboxylase carboxyltransferase subunit alpha</shortName>
        <ecNumber evidence="1">2.1.3.15</ecNumber>
    </recommendedName>
</protein>